<organism>
    <name type="scientific">Desulfosudis oleivorans (strain DSM 6200 / JCM 39069 / Hxd3)</name>
    <name type="common">Desulfococcus oleovorans</name>
    <dbReference type="NCBI Taxonomy" id="96561"/>
    <lineage>
        <taxon>Bacteria</taxon>
        <taxon>Pseudomonadati</taxon>
        <taxon>Thermodesulfobacteriota</taxon>
        <taxon>Desulfobacteria</taxon>
        <taxon>Desulfobacterales</taxon>
        <taxon>Desulfosudaceae</taxon>
        <taxon>Desulfosudis</taxon>
    </lineage>
</organism>
<accession>A8ZUM7</accession>
<reference key="1">
    <citation type="submission" date="2007-10" db="EMBL/GenBank/DDBJ databases">
        <title>Complete sequence of Desulfococcus oleovorans Hxd3.</title>
        <authorList>
            <consortium name="US DOE Joint Genome Institute"/>
            <person name="Copeland A."/>
            <person name="Lucas S."/>
            <person name="Lapidus A."/>
            <person name="Barry K."/>
            <person name="Glavina del Rio T."/>
            <person name="Dalin E."/>
            <person name="Tice H."/>
            <person name="Pitluck S."/>
            <person name="Kiss H."/>
            <person name="Brettin T."/>
            <person name="Bruce D."/>
            <person name="Detter J.C."/>
            <person name="Han C."/>
            <person name="Schmutz J."/>
            <person name="Larimer F."/>
            <person name="Land M."/>
            <person name="Hauser L."/>
            <person name="Kyrpides N."/>
            <person name="Kim E."/>
            <person name="Wawrik B."/>
            <person name="Richardson P."/>
        </authorList>
    </citation>
    <scope>NUCLEOTIDE SEQUENCE [LARGE SCALE GENOMIC DNA]</scope>
    <source>
        <strain>DSM 6200 / JCM 39069 / Hxd3</strain>
    </source>
</reference>
<gene>
    <name evidence="1" type="primary">atpB</name>
    <name type="ordered locus">Dole_0630</name>
</gene>
<protein>
    <recommendedName>
        <fullName evidence="1">ATP synthase subunit a</fullName>
    </recommendedName>
    <alternativeName>
        <fullName evidence="1">ATP synthase F0 sector subunit a</fullName>
    </alternativeName>
    <alternativeName>
        <fullName evidence="1">F-ATPase subunit 6</fullName>
    </alternativeName>
</protein>
<keyword id="KW-0066">ATP synthesis</keyword>
<keyword id="KW-0997">Cell inner membrane</keyword>
<keyword id="KW-1003">Cell membrane</keyword>
<keyword id="KW-0138">CF(0)</keyword>
<keyword id="KW-0375">Hydrogen ion transport</keyword>
<keyword id="KW-0406">Ion transport</keyword>
<keyword id="KW-0472">Membrane</keyword>
<keyword id="KW-1185">Reference proteome</keyword>
<keyword id="KW-0812">Transmembrane</keyword>
<keyword id="KW-1133">Transmembrane helix</keyword>
<keyword id="KW-0813">Transport</keyword>
<evidence type="ECO:0000255" key="1">
    <source>
        <dbReference type="HAMAP-Rule" id="MF_01393"/>
    </source>
</evidence>
<sequence length="229" mass="25579">MEHPYLFFVKLFEALGFEHFAHTSVHIIYTWVVMALLITLGVLGARNIQIVPTKMQNFLEVLISGIEEFMVSVTGEEGRWFFPLAGTIAIFIAVSNLIGLVPGFFPPTASINTPLACAIVVFVFTHFIGIKYHGPKYIKHFLGPVWWLAPLIFPIEIIGHLARVLSLTFRLFGNMMGHESVLVILFMLGGAFFAPLPIMALGIFVAFVQAFVFFLLSVMYFAGAMEHAH</sequence>
<proteinExistence type="inferred from homology"/>
<feature type="chain" id="PRO_0000362282" description="ATP synthase subunit a">
    <location>
        <begin position="1"/>
        <end position="229"/>
    </location>
</feature>
<feature type="transmembrane region" description="Helical" evidence="1">
    <location>
        <begin position="25"/>
        <end position="45"/>
    </location>
</feature>
<feature type="transmembrane region" description="Helical" evidence="1">
    <location>
        <begin position="58"/>
        <end position="75"/>
    </location>
</feature>
<feature type="transmembrane region" description="Helical" evidence="1">
    <location>
        <begin position="81"/>
        <end position="101"/>
    </location>
</feature>
<feature type="transmembrane region" description="Helical" evidence="1">
    <location>
        <begin position="110"/>
        <end position="130"/>
    </location>
</feature>
<feature type="transmembrane region" description="Helical" evidence="1">
    <location>
        <begin position="141"/>
        <end position="161"/>
    </location>
</feature>
<feature type="transmembrane region" description="Helical" evidence="1">
    <location>
        <begin position="175"/>
        <end position="195"/>
    </location>
</feature>
<feature type="transmembrane region" description="Helical" evidence="1">
    <location>
        <begin position="196"/>
        <end position="216"/>
    </location>
</feature>
<name>ATP6_DESOH</name>
<dbReference type="EMBL" id="CP000859">
    <property type="protein sequence ID" value="ABW66440.1"/>
    <property type="molecule type" value="Genomic_DNA"/>
</dbReference>
<dbReference type="RefSeq" id="WP_012174059.1">
    <property type="nucleotide sequence ID" value="NC_009943.1"/>
</dbReference>
<dbReference type="SMR" id="A8ZUM7"/>
<dbReference type="STRING" id="96561.Dole_0630"/>
<dbReference type="KEGG" id="dol:Dole_0630"/>
<dbReference type="eggNOG" id="COG0356">
    <property type="taxonomic scope" value="Bacteria"/>
</dbReference>
<dbReference type="HOGENOM" id="CLU_041018_2_2_7"/>
<dbReference type="OrthoDB" id="9789241at2"/>
<dbReference type="Proteomes" id="UP000008561">
    <property type="component" value="Chromosome"/>
</dbReference>
<dbReference type="GO" id="GO:0005886">
    <property type="term" value="C:plasma membrane"/>
    <property type="evidence" value="ECO:0007669"/>
    <property type="project" value="UniProtKB-SubCell"/>
</dbReference>
<dbReference type="GO" id="GO:0045259">
    <property type="term" value="C:proton-transporting ATP synthase complex"/>
    <property type="evidence" value="ECO:0007669"/>
    <property type="project" value="UniProtKB-KW"/>
</dbReference>
<dbReference type="GO" id="GO:0046933">
    <property type="term" value="F:proton-transporting ATP synthase activity, rotational mechanism"/>
    <property type="evidence" value="ECO:0007669"/>
    <property type="project" value="UniProtKB-UniRule"/>
</dbReference>
<dbReference type="GO" id="GO:0042777">
    <property type="term" value="P:proton motive force-driven plasma membrane ATP synthesis"/>
    <property type="evidence" value="ECO:0007669"/>
    <property type="project" value="TreeGrafter"/>
</dbReference>
<dbReference type="CDD" id="cd00310">
    <property type="entry name" value="ATP-synt_Fo_a_6"/>
    <property type="match status" value="1"/>
</dbReference>
<dbReference type="Gene3D" id="1.20.120.220">
    <property type="entry name" value="ATP synthase, F0 complex, subunit A"/>
    <property type="match status" value="1"/>
</dbReference>
<dbReference type="HAMAP" id="MF_01393">
    <property type="entry name" value="ATP_synth_a_bact"/>
    <property type="match status" value="1"/>
</dbReference>
<dbReference type="InterPro" id="IPR045082">
    <property type="entry name" value="ATP_syn_F0_a_bact/chloroplast"/>
</dbReference>
<dbReference type="InterPro" id="IPR000568">
    <property type="entry name" value="ATP_synth_F0_asu"/>
</dbReference>
<dbReference type="InterPro" id="IPR023011">
    <property type="entry name" value="ATP_synth_F0_asu_AS"/>
</dbReference>
<dbReference type="InterPro" id="IPR035908">
    <property type="entry name" value="F0_ATP_A_sf"/>
</dbReference>
<dbReference type="NCBIfam" id="TIGR01131">
    <property type="entry name" value="ATP_synt_6_or_A"/>
    <property type="match status" value="1"/>
</dbReference>
<dbReference type="PANTHER" id="PTHR42823">
    <property type="entry name" value="ATP SYNTHASE SUBUNIT A, CHLOROPLASTIC"/>
    <property type="match status" value="1"/>
</dbReference>
<dbReference type="PANTHER" id="PTHR42823:SF3">
    <property type="entry name" value="ATP SYNTHASE SUBUNIT A, CHLOROPLASTIC"/>
    <property type="match status" value="1"/>
</dbReference>
<dbReference type="Pfam" id="PF00119">
    <property type="entry name" value="ATP-synt_A"/>
    <property type="match status" value="1"/>
</dbReference>
<dbReference type="PRINTS" id="PR00123">
    <property type="entry name" value="ATPASEA"/>
</dbReference>
<dbReference type="SUPFAM" id="SSF81336">
    <property type="entry name" value="F1F0 ATP synthase subunit A"/>
    <property type="match status" value="1"/>
</dbReference>
<dbReference type="PROSITE" id="PS00449">
    <property type="entry name" value="ATPASE_A"/>
    <property type="match status" value="1"/>
</dbReference>
<comment type="function">
    <text evidence="1">Key component of the proton channel; it plays a direct role in the translocation of protons across the membrane.</text>
</comment>
<comment type="subunit">
    <text evidence="1">F-type ATPases have 2 components, CF(1) - the catalytic core - and CF(0) - the membrane proton channel. CF(1) has five subunits: alpha(3), beta(3), gamma(1), delta(1), epsilon(1). CF(0) has three main subunits: a(1), b(2) and c(9-12). The alpha and beta chains form an alternating ring which encloses part of the gamma chain. CF(1) is attached to CF(0) by a central stalk formed by the gamma and epsilon chains, while a peripheral stalk is formed by the delta and b chains.</text>
</comment>
<comment type="subcellular location">
    <subcellularLocation>
        <location evidence="1">Cell inner membrane</location>
        <topology evidence="1">Multi-pass membrane protein</topology>
    </subcellularLocation>
</comment>
<comment type="similarity">
    <text evidence="1">Belongs to the ATPase A chain family.</text>
</comment>